<gene>
    <name type="primary">V-YES</name>
</gene>
<reference key="1">
    <citation type="journal article" date="1982" name="Nature">
        <title>Avian sarcoma virus Y73 genome sequence and structural similarity of its transforming gene product to that of Rous sarcoma virus.</title>
        <authorList>
            <person name="Kitamura N."/>
            <person name="Kitamura A."/>
            <person name="Toyoshima K."/>
            <person name="Hirayama Y."/>
            <person name="Yoshida M."/>
        </authorList>
    </citation>
    <scope>NUCLEOTIDE SEQUENCE</scope>
</reference>
<proteinExistence type="inferred from homology"/>
<keyword id="KW-0067">ATP-binding</keyword>
<keyword id="KW-0418">Kinase</keyword>
<keyword id="KW-0547">Nucleotide-binding</keyword>
<keyword id="KW-0553">Oncogene</keyword>
<keyword id="KW-0597">Phosphoprotein</keyword>
<keyword id="KW-0727">SH2 domain</keyword>
<keyword id="KW-0728">SH3 domain</keyword>
<keyword id="KW-0808">Transferase</keyword>
<keyword id="KW-0829">Tyrosine-protein kinase</keyword>
<sequence length="528" mass="59104">DKGPAMKYRTDNTPEPISSHVSHYGSDSSQATQSPAIKGSAVNFNSHSMTPFGGPSGMTPFGGASSSFSAVPSPYPSTLTGGGTVFVALYDYEARTTDDLSFKGGERFQIINNTEGDWWEARSIATGKTGYIPSNYVAPADSIEAEEWYFGKMGRKDAERLLLNPGNQRGIFLVRESETTKGAYSLSIRDWDEVRGDNVKHYKIRKLDNGGYYITTRAQFESLQKLVKHSREHADGLCHKLTTVCPTVKPQTQGLAKDAWEIPRESLRLEVKLGQGCFGEVWMGTWNGTTKVAIKTLKLGTMMPEAFLQEAQIMKKLRHDKLVPLYAVVSEEPIYIVTEFMTKGSLLDFLKEGEGKFLKLPQLVDMAAQIADGMAYIERMNYIHRDLRAANILVGDNLVCKIADFGLARLIEDNEYTARQGAKFPIKWTAPEAALYGRFTIKSDVWSFGILLTELVTKGRVPYPGMVNREVLEQVERGYRMPCPQGCPESLHELMKLCWKKDPDERPTFEYIQSFLEDYFTAAEPSGY</sequence>
<feature type="chain" id="PRO_0000088179" description="Tyrosine-protein kinase transforming protein Yes">
    <location>
        <begin position="1" status="less than"/>
        <end position="528"/>
    </location>
</feature>
<feature type="domain" description="SH3" evidence="4">
    <location>
        <begin position="81"/>
        <end position="142"/>
    </location>
</feature>
<feature type="domain" description="SH2" evidence="3">
    <location>
        <begin position="148"/>
        <end position="245"/>
    </location>
</feature>
<feature type="domain" description="Protein kinase" evidence="2">
    <location>
        <begin position="267"/>
        <end position="520"/>
    </location>
</feature>
<feature type="region of interest" description="Disordered" evidence="6">
    <location>
        <begin position="1"/>
        <end position="35"/>
    </location>
</feature>
<feature type="compositionally biased region" description="Basic and acidic residues" evidence="6">
    <location>
        <begin position="1"/>
        <end position="12"/>
    </location>
</feature>
<feature type="compositionally biased region" description="Low complexity" evidence="6">
    <location>
        <begin position="18"/>
        <end position="29"/>
    </location>
</feature>
<feature type="active site" description="Proton acceptor" evidence="2 5">
    <location>
        <position position="386"/>
    </location>
</feature>
<feature type="binding site" evidence="2">
    <location>
        <begin position="273"/>
        <end position="281"/>
    </location>
    <ligand>
        <name>ATP</name>
        <dbReference type="ChEBI" id="CHEBI:30616"/>
    </ligand>
</feature>
<feature type="binding site" evidence="2">
    <location>
        <position position="295"/>
    </location>
    <ligand>
        <name>ATP</name>
        <dbReference type="ChEBI" id="CHEBI:30616"/>
    </ligand>
</feature>
<feature type="modified residue" description="Phosphotyrosine; by autocatalysis" evidence="1">
    <location>
        <position position="416"/>
    </location>
</feature>
<feature type="non-terminal residue">
    <location>
        <position position="1"/>
    </location>
</feature>
<evidence type="ECO:0000250" key="1"/>
<evidence type="ECO:0000255" key="2">
    <source>
        <dbReference type="PROSITE-ProRule" id="PRU00159"/>
    </source>
</evidence>
<evidence type="ECO:0000255" key="3">
    <source>
        <dbReference type="PROSITE-ProRule" id="PRU00191"/>
    </source>
</evidence>
<evidence type="ECO:0000255" key="4">
    <source>
        <dbReference type="PROSITE-ProRule" id="PRU00192"/>
    </source>
</evidence>
<evidence type="ECO:0000255" key="5">
    <source>
        <dbReference type="PROSITE-ProRule" id="PRU10028"/>
    </source>
</evidence>
<evidence type="ECO:0000256" key="6">
    <source>
        <dbReference type="SAM" id="MobiDB-lite"/>
    </source>
</evidence>
<evidence type="ECO:0000305" key="7"/>
<organismHost>
    <name type="scientific">Galliformes</name>
    <dbReference type="NCBI Taxonomy" id="8976"/>
</organismHost>
<dbReference type="EC" id="2.7.10.2"/>
<dbReference type="EMBL" id="V01170">
    <property type="protein sequence ID" value="CAA24496.1"/>
    <property type="status" value="ALT_INIT"/>
    <property type="molecule type" value="Unassigned_RNA"/>
</dbReference>
<dbReference type="PIR" id="A00633">
    <property type="entry name" value="TVFVG9"/>
</dbReference>
<dbReference type="SMR" id="P00527"/>
<dbReference type="BRENDA" id="2.7.10.2">
    <property type="organism ID" value="600"/>
</dbReference>
<dbReference type="Proteomes" id="UP000164967">
    <property type="component" value="Genome"/>
</dbReference>
<dbReference type="GO" id="GO:0005524">
    <property type="term" value="F:ATP binding"/>
    <property type="evidence" value="ECO:0007669"/>
    <property type="project" value="UniProtKB-KW"/>
</dbReference>
<dbReference type="GO" id="GO:0004715">
    <property type="term" value="F:non-membrane spanning protein tyrosine kinase activity"/>
    <property type="evidence" value="ECO:0007669"/>
    <property type="project" value="UniProtKB-EC"/>
</dbReference>
<dbReference type="CDD" id="cd09933">
    <property type="entry name" value="SH2_Src_family"/>
    <property type="match status" value="1"/>
</dbReference>
<dbReference type="CDD" id="cd12007">
    <property type="entry name" value="SH3_Yes"/>
    <property type="match status" value="1"/>
</dbReference>
<dbReference type="FunFam" id="1.10.510.10:FF:000553">
    <property type="entry name" value="Tyrosine-protein kinase"/>
    <property type="match status" value="1"/>
</dbReference>
<dbReference type="FunFam" id="2.30.30.40:FF:000022">
    <property type="entry name" value="Tyrosine-protein kinase"/>
    <property type="match status" value="1"/>
</dbReference>
<dbReference type="FunFam" id="3.30.200.20:FF:000016">
    <property type="entry name" value="Tyrosine-protein kinase"/>
    <property type="match status" value="1"/>
</dbReference>
<dbReference type="FunFam" id="3.30.505.10:FF:000001">
    <property type="entry name" value="Tyrosine-protein kinase"/>
    <property type="match status" value="1"/>
</dbReference>
<dbReference type="Gene3D" id="3.30.200.20">
    <property type="entry name" value="Phosphorylase Kinase, domain 1"/>
    <property type="match status" value="1"/>
</dbReference>
<dbReference type="Gene3D" id="3.30.505.10">
    <property type="entry name" value="SH2 domain"/>
    <property type="match status" value="1"/>
</dbReference>
<dbReference type="Gene3D" id="2.30.30.40">
    <property type="entry name" value="SH3 Domains"/>
    <property type="match status" value="1"/>
</dbReference>
<dbReference type="Gene3D" id="1.10.510.10">
    <property type="entry name" value="Transferase(Phosphotransferase) domain 1"/>
    <property type="match status" value="1"/>
</dbReference>
<dbReference type="InterPro" id="IPR011009">
    <property type="entry name" value="Kinase-like_dom_sf"/>
</dbReference>
<dbReference type="InterPro" id="IPR050198">
    <property type="entry name" value="Non-receptor_tyrosine_kinases"/>
</dbReference>
<dbReference type="InterPro" id="IPR000719">
    <property type="entry name" value="Prot_kinase_dom"/>
</dbReference>
<dbReference type="InterPro" id="IPR017441">
    <property type="entry name" value="Protein_kinase_ATP_BS"/>
</dbReference>
<dbReference type="InterPro" id="IPR001245">
    <property type="entry name" value="Ser-Thr/Tyr_kinase_cat_dom"/>
</dbReference>
<dbReference type="InterPro" id="IPR000980">
    <property type="entry name" value="SH2"/>
</dbReference>
<dbReference type="InterPro" id="IPR036860">
    <property type="entry name" value="SH2_dom_sf"/>
</dbReference>
<dbReference type="InterPro" id="IPR036028">
    <property type="entry name" value="SH3-like_dom_sf"/>
</dbReference>
<dbReference type="InterPro" id="IPR001452">
    <property type="entry name" value="SH3_domain"/>
</dbReference>
<dbReference type="InterPro" id="IPR008266">
    <property type="entry name" value="Tyr_kinase_AS"/>
</dbReference>
<dbReference type="InterPro" id="IPR020635">
    <property type="entry name" value="Tyr_kinase_cat_dom"/>
</dbReference>
<dbReference type="InterPro" id="IPR035751">
    <property type="entry name" value="Yes_SH3"/>
</dbReference>
<dbReference type="PANTHER" id="PTHR24418">
    <property type="entry name" value="TYROSINE-PROTEIN KINASE"/>
    <property type="match status" value="1"/>
</dbReference>
<dbReference type="Pfam" id="PF07714">
    <property type="entry name" value="PK_Tyr_Ser-Thr"/>
    <property type="match status" value="1"/>
</dbReference>
<dbReference type="Pfam" id="PF00017">
    <property type="entry name" value="SH2"/>
    <property type="match status" value="1"/>
</dbReference>
<dbReference type="Pfam" id="PF00018">
    <property type="entry name" value="SH3_1"/>
    <property type="match status" value="1"/>
</dbReference>
<dbReference type="PRINTS" id="PR00401">
    <property type="entry name" value="SH2DOMAIN"/>
</dbReference>
<dbReference type="PRINTS" id="PR00452">
    <property type="entry name" value="SH3DOMAIN"/>
</dbReference>
<dbReference type="PRINTS" id="PR00109">
    <property type="entry name" value="TYRKINASE"/>
</dbReference>
<dbReference type="SMART" id="SM00252">
    <property type="entry name" value="SH2"/>
    <property type="match status" value="1"/>
</dbReference>
<dbReference type="SMART" id="SM00326">
    <property type="entry name" value="SH3"/>
    <property type="match status" value="1"/>
</dbReference>
<dbReference type="SMART" id="SM00219">
    <property type="entry name" value="TyrKc"/>
    <property type="match status" value="1"/>
</dbReference>
<dbReference type="SUPFAM" id="SSF56112">
    <property type="entry name" value="Protein kinase-like (PK-like)"/>
    <property type="match status" value="1"/>
</dbReference>
<dbReference type="SUPFAM" id="SSF55550">
    <property type="entry name" value="SH2 domain"/>
    <property type="match status" value="1"/>
</dbReference>
<dbReference type="SUPFAM" id="SSF50044">
    <property type="entry name" value="SH3-domain"/>
    <property type="match status" value="1"/>
</dbReference>
<dbReference type="PROSITE" id="PS00107">
    <property type="entry name" value="PROTEIN_KINASE_ATP"/>
    <property type="match status" value="1"/>
</dbReference>
<dbReference type="PROSITE" id="PS50011">
    <property type="entry name" value="PROTEIN_KINASE_DOM"/>
    <property type="match status" value="1"/>
</dbReference>
<dbReference type="PROSITE" id="PS00109">
    <property type="entry name" value="PROTEIN_KINASE_TYR"/>
    <property type="match status" value="1"/>
</dbReference>
<dbReference type="PROSITE" id="PS50001">
    <property type="entry name" value="SH2"/>
    <property type="match status" value="1"/>
</dbReference>
<dbReference type="PROSITE" id="PS50002">
    <property type="entry name" value="SH3"/>
    <property type="match status" value="1"/>
</dbReference>
<accession>P00527</accession>
<organism>
    <name type="scientific">Y73 avian sarcoma virus</name>
    <name type="common">Y73SV</name>
    <name type="synonym">Avian sarcoma virus (strain Y73)</name>
    <dbReference type="NCBI Taxonomy" id="11884"/>
    <lineage>
        <taxon>Viruses</taxon>
        <taxon>Riboviria</taxon>
        <taxon>Pararnavirae</taxon>
        <taxon>Artverviricota</taxon>
        <taxon>Revtraviricetes</taxon>
        <taxon>Ortervirales</taxon>
        <taxon>Retroviridae</taxon>
        <taxon>Orthoretrovirinae</taxon>
        <taxon>Alpharetrovirus</taxon>
    </lineage>
</organism>
<protein>
    <recommendedName>
        <fullName>Tyrosine-protein kinase transforming protein Yes</fullName>
        <ecNumber>2.7.10.2</ecNumber>
    </recommendedName>
</protein>
<comment type="catalytic activity">
    <reaction evidence="5">
        <text>L-tyrosyl-[protein] + ATP = O-phospho-L-tyrosyl-[protein] + ADP + H(+)</text>
        <dbReference type="Rhea" id="RHEA:10596"/>
        <dbReference type="Rhea" id="RHEA-COMP:10136"/>
        <dbReference type="Rhea" id="RHEA-COMP:20101"/>
        <dbReference type="ChEBI" id="CHEBI:15378"/>
        <dbReference type="ChEBI" id="CHEBI:30616"/>
        <dbReference type="ChEBI" id="CHEBI:46858"/>
        <dbReference type="ChEBI" id="CHEBI:61978"/>
        <dbReference type="ChEBI" id="CHEBI:456216"/>
        <dbReference type="EC" id="2.7.10.2"/>
    </reaction>
</comment>
<comment type="miscellaneous">
    <text>This protein is synthesized as a Gag-Yes polyprotein.</text>
</comment>
<comment type="similarity">
    <text evidence="2">Belongs to the protein kinase superfamily. Tyr protein kinase family. SRC subfamily.</text>
</comment>
<comment type="sequence caution" evidence="7">
    <conflict type="erroneous initiation">
        <sequence resource="EMBL-CDS" id="CAA24496"/>
    </conflict>
</comment>
<name>YES_AVISY</name>